<sequence length="226" mass="24960">MKAIKIAIDGPASSGKSTVAKIIAKNLGYTYLDTGAMYRSATYIALTHGYTGKEVALILEELEKNPISFKKAKDGSQLVFLGDEDVTLAIRQNDVTNNVSWVSALPEIREELVHQQRRIAQAGGIIMDGRDIGTVVLPDAELKIFLVASVEERAERRYKENLEKGIESDFETLKEEIAARDYKDSHRKVSPLKAAEDALIFDTTGVSIDGVVQFIQEKAEKIVDMS</sequence>
<name>KCY_STRP3</name>
<dbReference type="EC" id="2.7.4.25" evidence="1"/>
<dbReference type="EMBL" id="AE014074">
    <property type="protein sequence ID" value="AAM79144.1"/>
    <property type="molecule type" value="Genomic_DNA"/>
</dbReference>
<dbReference type="RefSeq" id="WP_009880409.1">
    <property type="nucleotide sequence ID" value="NC_004070.1"/>
</dbReference>
<dbReference type="SMR" id="P0DA38"/>
<dbReference type="KEGG" id="spg:SpyM3_0537"/>
<dbReference type="HOGENOM" id="CLU_079959_0_2_9"/>
<dbReference type="Proteomes" id="UP000000564">
    <property type="component" value="Chromosome"/>
</dbReference>
<dbReference type="GO" id="GO:0005829">
    <property type="term" value="C:cytosol"/>
    <property type="evidence" value="ECO:0007669"/>
    <property type="project" value="TreeGrafter"/>
</dbReference>
<dbReference type="GO" id="GO:0005524">
    <property type="term" value="F:ATP binding"/>
    <property type="evidence" value="ECO:0007669"/>
    <property type="project" value="UniProtKB-UniRule"/>
</dbReference>
<dbReference type="GO" id="GO:0036430">
    <property type="term" value="F:CMP kinase activity"/>
    <property type="evidence" value="ECO:0007669"/>
    <property type="project" value="RHEA"/>
</dbReference>
<dbReference type="GO" id="GO:0036431">
    <property type="term" value="F:dCMP kinase activity"/>
    <property type="evidence" value="ECO:0007669"/>
    <property type="project" value="RHEA"/>
</dbReference>
<dbReference type="GO" id="GO:0015949">
    <property type="term" value="P:nucleobase-containing small molecule interconversion"/>
    <property type="evidence" value="ECO:0007669"/>
    <property type="project" value="TreeGrafter"/>
</dbReference>
<dbReference type="GO" id="GO:0006220">
    <property type="term" value="P:pyrimidine nucleotide metabolic process"/>
    <property type="evidence" value="ECO:0007669"/>
    <property type="project" value="UniProtKB-UniRule"/>
</dbReference>
<dbReference type="CDD" id="cd02020">
    <property type="entry name" value="CMPK"/>
    <property type="match status" value="1"/>
</dbReference>
<dbReference type="FunFam" id="3.40.50.300:FF:000484">
    <property type="entry name" value="Cytidylate kinase"/>
    <property type="match status" value="1"/>
</dbReference>
<dbReference type="Gene3D" id="3.40.50.300">
    <property type="entry name" value="P-loop containing nucleotide triphosphate hydrolases"/>
    <property type="match status" value="1"/>
</dbReference>
<dbReference type="HAMAP" id="MF_00238">
    <property type="entry name" value="Cytidyl_kinase_type1"/>
    <property type="match status" value="1"/>
</dbReference>
<dbReference type="InterPro" id="IPR003136">
    <property type="entry name" value="Cytidylate_kin"/>
</dbReference>
<dbReference type="InterPro" id="IPR011994">
    <property type="entry name" value="Cytidylate_kinase_dom"/>
</dbReference>
<dbReference type="InterPro" id="IPR027417">
    <property type="entry name" value="P-loop_NTPase"/>
</dbReference>
<dbReference type="NCBIfam" id="TIGR00017">
    <property type="entry name" value="cmk"/>
    <property type="match status" value="1"/>
</dbReference>
<dbReference type="PANTHER" id="PTHR21299:SF2">
    <property type="entry name" value="CYTIDYLATE KINASE"/>
    <property type="match status" value="1"/>
</dbReference>
<dbReference type="PANTHER" id="PTHR21299">
    <property type="entry name" value="CYTIDYLATE KINASE/PANTOATE-BETA-ALANINE LIGASE"/>
    <property type="match status" value="1"/>
</dbReference>
<dbReference type="Pfam" id="PF02224">
    <property type="entry name" value="Cytidylate_kin"/>
    <property type="match status" value="1"/>
</dbReference>
<dbReference type="SUPFAM" id="SSF52540">
    <property type="entry name" value="P-loop containing nucleoside triphosphate hydrolases"/>
    <property type="match status" value="1"/>
</dbReference>
<comment type="catalytic activity">
    <reaction evidence="1">
        <text>CMP + ATP = CDP + ADP</text>
        <dbReference type="Rhea" id="RHEA:11600"/>
        <dbReference type="ChEBI" id="CHEBI:30616"/>
        <dbReference type="ChEBI" id="CHEBI:58069"/>
        <dbReference type="ChEBI" id="CHEBI:60377"/>
        <dbReference type="ChEBI" id="CHEBI:456216"/>
        <dbReference type="EC" id="2.7.4.25"/>
    </reaction>
</comment>
<comment type="catalytic activity">
    <reaction evidence="1">
        <text>dCMP + ATP = dCDP + ADP</text>
        <dbReference type="Rhea" id="RHEA:25094"/>
        <dbReference type="ChEBI" id="CHEBI:30616"/>
        <dbReference type="ChEBI" id="CHEBI:57566"/>
        <dbReference type="ChEBI" id="CHEBI:58593"/>
        <dbReference type="ChEBI" id="CHEBI:456216"/>
        <dbReference type="EC" id="2.7.4.25"/>
    </reaction>
</comment>
<comment type="subcellular location">
    <subcellularLocation>
        <location evidence="1">Cytoplasm</location>
    </subcellularLocation>
</comment>
<comment type="similarity">
    <text evidence="1">Belongs to the cytidylate kinase family. Type 1 subfamily.</text>
</comment>
<reference key="1">
    <citation type="journal article" date="2002" name="Proc. Natl. Acad. Sci. U.S.A.">
        <title>Genome sequence of a serotype M3 strain of group A Streptococcus: phage-encoded toxins, the high-virulence phenotype, and clone emergence.</title>
        <authorList>
            <person name="Beres S.B."/>
            <person name="Sylva G.L."/>
            <person name="Barbian K.D."/>
            <person name="Lei B."/>
            <person name="Hoff J.S."/>
            <person name="Mammarella N.D."/>
            <person name="Liu M.-Y."/>
            <person name="Smoot J.C."/>
            <person name="Porcella S.F."/>
            <person name="Parkins L.D."/>
            <person name="Campbell D.S."/>
            <person name="Smith T.M."/>
            <person name="McCormick J.K."/>
            <person name="Leung D.Y.M."/>
            <person name="Schlievert P.M."/>
            <person name="Musser J.M."/>
        </authorList>
    </citation>
    <scope>NUCLEOTIDE SEQUENCE [LARGE SCALE GENOMIC DNA]</scope>
    <source>
        <strain>ATCC BAA-595 / MGAS315</strain>
    </source>
</reference>
<evidence type="ECO:0000255" key="1">
    <source>
        <dbReference type="HAMAP-Rule" id="MF_00238"/>
    </source>
</evidence>
<feature type="chain" id="PRO_0000131988" description="Cytidylate kinase">
    <location>
        <begin position="1"/>
        <end position="226"/>
    </location>
</feature>
<feature type="binding site" evidence="1">
    <location>
        <begin position="10"/>
        <end position="18"/>
    </location>
    <ligand>
        <name>ATP</name>
        <dbReference type="ChEBI" id="CHEBI:30616"/>
    </ligand>
</feature>
<keyword id="KW-0067">ATP-binding</keyword>
<keyword id="KW-0963">Cytoplasm</keyword>
<keyword id="KW-0418">Kinase</keyword>
<keyword id="KW-0547">Nucleotide-binding</keyword>
<keyword id="KW-0808">Transferase</keyword>
<proteinExistence type="inferred from homology"/>
<organism>
    <name type="scientific">Streptococcus pyogenes serotype M3 (strain ATCC BAA-595 / MGAS315)</name>
    <dbReference type="NCBI Taxonomy" id="198466"/>
    <lineage>
        <taxon>Bacteria</taxon>
        <taxon>Bacillati</taxon>
        <taxon>Bacillota</taxon>
        <taxon>Bacilli</taxon>
        <taxon>Lactobacillales</taxon>
        <taxon>Streptococcaceae</taxon>
        <taxon>Streptococcus</taxon>
    </lineage>
</organism>
<gene>
    <name evidence="1" type="primary">cmk</name>
    <name type="ordered locus">SpyM3_0537</name>
</gene>
<accession>P0DA38</accession>
<accession>Q8K7Z9</accession>
<protein>
    <recommendedName>
        <fullName evidence="1">Cytidylate kinase</fullName>
        <shortName evidence="1">CK</shortName>
        <ecNumber evidence="1">2.7.4.25</ecNumber>
    </recommendedName>
    <alternativeName>
        <fullName evidence="1">Cytidine monophosphate kinase</fullName>
        <shortName evidence="1">CMP kinase</shortName>
    </alternativeName>
</protein>